<gene>
    <name evidence="1" type="primary">pyrC</name>
    <name type="ordered locus">Mfla_2280</name>
</gene>
<evidence type="ECO:0000255" key="1">
    <source>
        <dbReference type="HAMAP-Rule" id="MF_00219"/>
    </source>
</evidence>
<name>PYRC_METFK</name>
<reference key="1">
    <citation type="submission" date="2006-03" db="EMBL/GenBank/DDBJ databases">
        <title>Complete sequence of Methylobacillus flagellatus KT.</title>
        <authorList>
            <consortium name="US DOE Joint Genome Institute"/>
            <person name="Copeland A."/>
            <person name="Lucas S."/>
            <person name="Lapidus A."/>
            <person name="Barry K."/>
            <person name="Detter J.C."/>
            <person name="Glavina del Rio T."/>
            <person name="Hammon N."/>
            <person name="Israni S."/>
            <person name="Dalin E."/>
            <person name="Tice H."/>
            <person name="Pitluck S."/>
            <person name="Brettin T."/>
            <person name="Bruce D."/>
            <person name="Han C."/>
            <person name="Tapia R."/>
            <person name="Saunders E."/>
            <person name="Gilna P."/>
            <person name="Schmutz J."/>
            <person name="Larimer F."/>
            <person name="Land M."/>
            <person name="Kyrpides N."/>
            <person name="Anderson I."/>
            <person name="Richardson P."/>
        </authorList>
    </citation>
    <scope>NUCLEOTIDE SEQUENCE [LARGE SCALE GENOMIC DNA]</scope>
    <source>
        <strain>ATCC 51484 / DSM 6875 / VKM B-1610 / KT</strain>
    </source>
</reference>
<protein>
    <recommendedName>
        <fullName evidence="1">Dihydroorotase</fullName>
        <shortName evidence="1">DHOase</shortName>
        <ecNumber evidence="1">3.5.2.3</ecNumber>
    </recommendedName>
</protein>
<keyword id="KW-0378">Hydrolase</keyword>
<keyword id="KW-0479">Metal-binding</keyword>
<keyword id="KW-0665">Pyrimidine biosynthesis</keyword>
<keyword id="KW-1185">Reference proteome</keyword>
<keyword id="KW-0862">Zinc</keyword>
<sequence>MTTTITITRPDDWHLHLRDGAALSAVLPDSARRFGRAIVMPNLRPPVTTTALAYAYRERIMQAMPAGSGFEPLMTLYLTDNTSAEEIDRAKASGIVHGVKLYPAGATTNSDSGVTNIGHCVKALEAMEKHGIPLLVHAEVTDVDVDVFDRERVFIERNMVPLLERFQGLRVVFEHITTKDAANFVAGAPENVAATITAHHLLMNRNAMFNGGIRPHHYCLPVLKREEHRLALVAAATSGNPKFFLGTDSAPHAKSAKEAACGCAGMYTAHAGIELYTEVFDAAGSLDRLEAFASFHGPDFYRLPRNTDKITLEKTAWEVPASLPFAGDELVPLRAGSHISWRLKD</sequence>
<accession>Q1GYZ0</accession>
<proteinExistence type="inferred from homology"/>
<organism>
    <name type="scientific">Methylobacillus flagellatus (strain ATCC 51484 / DSM 6875 / VKM B-1610 / KT)</name>
    <dbReference type="NCBI Taxonomy" id="265072"/>
    <lineage>
        <taxon>Bacteria</taxon>
        <taxon>Pseudomonadati</taxon>
        <taxon>Pseudomonadota</taxon>
        <taxon>Betaproteobacteria</taxon>
        <taxon>Nitrosomonadales</taxon>
        <taxon>Methylophilaceae</taxon>
        <taxon>Methylobacillus</taxon>
    </lineage>
</organism>
<dbReference type="EC" id="3.5.2.3" evidence="1"/>
<dbReference type="EMBL" id="CP000284">
    <property type="protein sequence ID" value="ABE50547.1"/>
    <property type="molecule type" value="Genomic_DNA"/>
</dbReference>
<dbReference type="RefSeq" id="WP_011480501.1">
    <property type="nucleotide sequence ID" value="NC_007947.1"/>
</dbReference>
<dbReference type="SMR" id="Q1GYZ0"/>
<dbReference type="STRING" id="265072.Mfla_2280"/>
<dbReference type="MEROPS" id="M38.A02"/>
<dbReference type="KEGG" id="mfa:Mfla_2280"/>
<dbReference type="eggNOG" id="COG0418">
    <property type="taxonomic scope" value="Bacteria"/>
</dbReference>
<dbReference type="HOGENOM" id="CLU_041558_1_0_4"/>
<dbReference type="OrthoDB" id="9808095at2"/>
<dbReference type="UniPathway" id="UPA00070">
    <property type="reaction ID" value="UER00117"/>
</dbReference>
<dbReference type="Proteomes" id="UP000002440">
    <property type="component" value="Chromosome"/>
</dbReference>
<dbReference type="GO" id="GO:0005829">
    <property type="term" value="C:cytosol"/>
    <property type="evidence" value="ECO:0007669"/>
    <property type="project" value="TreeGrafter"/>
</dbReference>
<dbReference type="GO" id="GO:0004151">
    <property type="term" value="F:dihydroorotase activity"/>
    <property type="evidence" value="ECO:0007669"/>
    <property type="project" value="UniProtKB-UniRule"/>
</dbReference>
<dbReference type="GO" id="GO:0008270">
    <property type="term" value="F:zinc ion binding"/>
    <property type="evidence" value="ECO:0007669"/>
    <property type="project" value="UniProtKB-UniRule"/>
</dbReference>
<dbReference type="GO" id="GO:0006207">
    <property type="term" value="P:'de novo' pyrimidine nucleobase biosynthetic process"/>
    <property type="evidence" value="ECO:0007669"/>
    <property type="project" value="TreeGrafter"/>
</dbReference>
<dbReference type="GO" id="GO:0044205">
    <property type="term" value="P:'de novo' UMP biosynthetic process"/>
    <property type="evidence" value="ECO:0007669"/>
    <property type="project" value="UniProtKB-UniRule"/>
</dbReference>
<dbReference type="CDD" id="cd01294">
    <property type="entry name" value="DHOase"/>
    <property type="match status" value="1"/>
</dbReference>
<dbReference type="FunFam" id="3.20.20.140:FF:000006">
    <property type="entry name" value="Dihydroorotase"/>
    <property type="match status" value="1"/>
</dbReference>
<dbReference type="Gene3D" id="3.20.20.140">
    <property type="entry name" value="Metal-dependent hydrolases"/>
    <property type="match status" value="1"/>
</dbReference>
<dbReference type="HAMAP" id="MF_00219">
    <property type="entry name" value="PyrC_classII"/>
    <property type="match status" value="1"/>
</dbReference>
<dbReference type="InterPro" id="IPR004721">
    <property type="entry name" value="DHOdimr"/>
</dbReference>
<dbReference type="InterPro" id="IPR002195">
    <property type="entry name" value="Dihydroorotase_CS"/>
</dbReference>
<dbReference type="InterPro" id="IPR032466">
    <property type="entry name" value="Metal_Hydrolase"/>
</dbReference>
<dbReference type="NCBIfam" id="TIGR00856">
    <property type="entry name" value="pyrC_dimer"/>
    <property type="match status" value="1"/>
</dbReference>
<dbReference type="PANTHER" id="PTHR43137">
    <property type="entry name" value="DIHYDROOROTASE"/>
    <property type="match status" value="1"/>
</dbReference>
<dbReference type="PANTHER" id="PTHR43137:SF1">
    <property type="entry name" value="DIHYDROOROTASE"/>
    <property type="match status" value="1"/>
</dbReference>
<dbReference type="PIRSF" id="PIRSF001237">
    <property type="entry name" value="DHOdimr"/>
    <property type="match status" value="1"/>
</dbReference>
<dbReference type="SUPFAM" id="SSF51556">
    <property type="entry name" value="Metallo-dependent hydrolases"/>
    <property type="match status" value="1"/>
</dbReference>
<dbReference type="PROSITE" id="PS00482">
    <property type="entry name" value="DIHYDROOROTASE_1"/>
    <property type="match status" value="1"/>
</dbReference>
<dbReference type="PROSITE" id="PS00483">
    <property type="entry name" value="DIHYDROOROTASE_2"/>
    <property type="match status" value="1"/>
</dbReference>
<feature type="chain" id="PRO_1000024022" description="Dihydroorotase">
    <location>
        <begin position="1"/>
        <end position="345"/>
    </location>
</feature>
<feature type="active site" evidence="1">
    <location>
        <position position="248"/>
    </location>
</feature>
<feature type="binding site" evidence="1">
    <location>
        <position position="14"/>
    </location>
    <ligand>
        <name>Zn(2+)</name>
        <dbReference type="ChEBI" id="CHEBI:29105"/>
        <label>1</label>
    </ligand>
</feature>
<feature type="binding site" evidence="1">
    <location>
        <begin position="16"/>
        <end position="18"/>
    </location>
    <ligand>
        <name>substrate</name>
    </ligand>
</feature>
<feature type="binding site" evidence="1">
    <location>
        <position position="16"/>
    </location>
    <ligand>
        <name>Zn(2+)</name>
        <dbReference type="ChEBI" id="CHEBI:29105"/>
        <label>1</label>
    </ligand>
</feature>
<feature type="binding site" evidence="1">
    <location>
        <position position="42"/>
    </location>
    <ligand>
        <name>substrate</name>
    </ligand>
</feature>
<feature type="binding site" description="via carbamate group" evidence="1">
    <location>
        <position position="100"/>
    </location>
    <ligand>
        <name>Zn(2+)</name>
        <dbReference type="ChEBI" id="CHEBI:29105"/>
        <label>1</label>
    </ligand>
</feature>
<feature type="binding site" description="via carbamate group" evidence="1">
    <location>
        <position position="100"/>
    </location>
    <ligand>
        <name>Zn(2+)</name>
        <dbReference type="ChEBI" id="CHEBI:29105"/>
        <label>2</label>
    </ligand>
</feature>
<feature type="binding site" evidence="1">
    <location>
        <position position="137"/>
    </location>
    <ligand>
        <name>substrate</name>
    </ligand>
</feature>
<feature type="binding site" evidence="1">
    <location>
        <position position="137"/>
    </location>
    <ligand>
        <name>Zn(2+)</name>
        <dbReference type="ChEBI" id="CHEBI:29105"/>
        <label>2</label>
    </ligand>
</feature>
<feature type="binding site" evidence="1">
    <location>
        <position position="175"/>
    </location>
    <ligand>
        <name>Zn(2+)</name>
        <dbReference type="ChEBI" id="CHEBI:29105"/>
        <label>2</label>
    </ligand>
</feature>
<feature type="binding site" evidence="1">
    <location>
        <position position="220"/>
    </location>
    <ligand>
        <name>substrate</name>
    </ligand>
</feature>
<feature type="binding site" evidence="1">
    <location>
        <position position="248"/>
    </location>
    <ligand>
        <name>Zn(2+)</name>
        <dbReference type="ChEBI" id="CHEBI:29105"/>
        <label>1</label>
    </ligand>
</feature>
<feature type="binding site" evidence="1">
    <location>
        <position position="252"/>
    </location>
    <ligand>
        <name>substrate</name>
    </ligand>
</feature>
<feature type="binding site" evidence="1">
    <location>
        <position position="264"/>
    </location>
    <ligand>
        <name>substrate</name>
    </ligand>
</feature>
<feature type="modified residue" description="N6-carboxylysine" evidence="1">
    <location>
        <position position="100"/>
    </location>
</feature>
<comment type="function">
    <text evidence="1">Catalyzes the reversible cyclization of carbamoyl aspartate to dihydroorotate.</text>
</comment>
<comment type="catalytic activity">
    <reaction evidence="1">
        <text>(S)-dihydroorotate + H2O = N-carbamoyl-L-aspartate + H(+)</text>
        <dbReference type="Rhea" id="RHEA:24296"/>
        <dbReference type="ChEBI" id="CHEBI:15377"/>
        <dbReference type="ChEBI" id="CHEBI:15378"/>
        <dbReference type="ChEBI" id="CHEBI:30864"/>
        <dbReference type="ChEBI" id="CHEBI:32814"/>
        <dbReference type="EC" id="3.5.2.3"/>
    </reaction>
</comment>
<comment type="cofactor">
    <cofactor evidence="1">
        <name>Zn(2+)</name>
        <dbReference type="ChEBI" id="CHEBI:29105"/>
    </cofactor>
    <text evidence="1">Binds 2 Zn(2+) ions per subunit.</text>
</comment>
<comment type="pathway">
    <text evidence="1">Pyrimidine metabolism; UMP biosynthesis via de novo pathway; (S)-dihydroorotate from bicarbonate: step 3/3.</text>
</comment>
<comment type="subunit">
    <text evidence="1">Homodimer.</text>
</comment>
<comment type="similarity">
    <text evidence="1">Belongs to the metallo-dependent hydrolases superfamily. DHOase family. Class II DHOase subfamily.</text>
</comment>